<protein>
    <recommendedName>
        <fullName evidence="1">Pyrimidine/purine nucleoside phosphorylase</fullName>
        <ecNumber evidence="1">2.4.2.1</ecNumber>
        <ecNumber evidence="1">2.4.2.2</ecNumber>
    </recommendedName>
    <alternativeName>
        <fullName evidence="1">Adenosine phosphorylase</fullName>
    </alternativeName>
    <alternativeName>
        <fullName evidence="1">Cytidine phosphorylase</fullName>
    </alternativeName>
    <alternativeName>
        <fullName evidence="1">Guanosine phosphorylase</fullName>
    </alternativeName>
    <alternativeName>
        <fullName evidence="1">Inosine phosphorylase</fullName>
    </alternativeName>
    <alternativeName>
        <fullName evidence="1">Thymidine phosphorylase</fullName>
    </alternativeName>
    <alternativeName>
        <fullName evidence="1">Uridine phosphorylase</fullName>
    </alternativeName>
    <alternativeName>
        <fullName evidence="1">Xanthosine phosphorylase</fullName>
    </alternativeName>
</protein>
<organism>
    <name type="scientific">Marinobacter nauticus (strain ATCC 700491 / DSM 11845 / VT8)</name>
    <name type="common">Marinobacter aquaeolei</name>
    <dbReference type="NCBI Taxonomy" id="351348"/>
    <lineage>
        <taxon>Bacteria</taxon>
        <taxon>Pseudomonadati</taxon>
        <taxon>Pseudomonadota</taxon>
        <taxon>Gammaproteobacteria</taxon>
        <taxon>Pseudomonadales</taxon>
        <taxon>Marinobacteraceae</taxon>
        <taxon>Marinobacter</taxon>
    </lineage>
</organism>
<name>PPNP_MARN8</name>
<comment type="function">
    <text evidence="1">Catalyzes the phosphorolysis of diverse nucleosides, yielding D-ribose 1-phosphate and the respective free bases. Can use uridine, adenosine, guanosine, cytidine, thymidine, inosine and xanthosine as substrates. Also catalyzes the reverse reactions.</text>
</comment>
<comment type="catalytic activity">
    <reaction evidence="1">
        <text>a purine D-ribonucleoside + phosphate = a purine nucleobase + alpha-D-ribose 1-phosphate</text>
        <dbReference type="Rhea" id="RHEA:19805"/>
        <dbReference type="ChEBI" id="CHEBI:26386"/>
        <dbReference type="ChEBI" id="CHEBI:43474"/>
        <dbReference type="ChEBI" id="CHEBI:57720"/>
        <dbReference type="ChEBI" id="CHEBI:142355"/>
        <dbReference type="EC" id="2.4.2.1"/>
    </reaction>
</comment>
<comment type="catalytic activity">
    <reaction evidence="1">
        <text>adenosine + phosphate = alpha-D-ribose 1-phosphate + adenine</text>
        <dbReference type="Rhea" id="RHEA:27642"/>
        <dbReference type="ChEBI" id="CHEBI:16335"/>
        <dbReference type="ChEBI" id="CHEBI:16708"/>
        <dbReference type="ChEBI" id="CHEBI:43474"/>
        <dbReference type="ChEBI" id="CHEBI:57720"/>
        <dbReference type="EC" id="2.4.2.1"/>
    </reaction>
</comment>
<comment type="catalytic activity">
    <reaction evidence="1">
        <text>cytidine + phosphate = cytosine + alpha-D-ribose 1-phosphate</text>
        <dbReference type="Rhea" id="RHEA:52540"/>
        <dbReference type="ChEBI" id="CHEBI:16040"/>
        <dbReference type="ChEBI" id="CHEBI:17562"/>
        <dbReference type="ChEBI" id="CHEBI:43474"/>
        <dbReference type="ChEBI" id="CHEBI:57720"/>
        <dbReference type="EC" id="2.4.2.2"/>
    </reaction>
</comment>
<comment type="catalytic activity">
    <reaction evidence="1">
        <text>guanosine + phosphate = alpha-D-ribose 1-phosphate + guanine</text>
        <dbReference type="Rhea" id="RHEA:13233"/>
        <dbReference type="ChEBI" id="CHEBI:16235"/>
        <dbReference type="ChEBI" id="CHEBI:16750"/>
        <dbReference type="ChEBI" id="CHEBI:43474"/>
        <dbReference type="ChEBI" id="CHEBI:57720"/>
        <dbReference type="EC" id="2.4.2.1"/>
    </reaction>
</comment>
<comment type="catalytic activity">
    <reaction evidence="1">
        <text>inosine + phosphate = alpha-D-ribose 1-phosphate + hypoxanthine</text>
        <dbReference type="Rhea" id="RHEA:27646"/>
        <dbReference type="ChEBI" id="CHEBI:17368"/>
        <dbReference type="ChEBI" id="CHEBI:17596"/>
        <dbReference type="ChEBI" id="CHEBI:43474"/>
        <dbReference type="ChEBI" id="CHEBI:57720"/>
        <dbReference type="EC" id="2.4.2.1"/>
    </reaction>
</comment>
<comment type="catalytic activity">
    <reaction evidence="1">
        <text>thymidine + phosphate = 2-deoxy-alpha-D-ribose 1-phosphate + thymine</text>
        <dbReference type="Rhea" id="RHEA:16037"/>
        <dbReference type="ChEBI" id="CHEBI:17748"/>
        <dbReference type="ChEBI" id="CHEBI:17821"/>
        <dbReference type="ChEBI" id="CHEBI:43474"/>
        <dbReference type="ChEBI" id="CHEBI:57259"/>
        <dbReference type="EC" id="2.4.2.2"/>
    </reaction>
</comment>
<comment type="catalytic activity">
    <reaction evidence="1">
        <text>uridine + phosphate = alpha-D-ribose 1-phosphate + uracil</text>
        <dbReference type="Rhea" id="RHEA:24388"/>
        <dbReference type="ChEBI" id="CHEBI:16704"/>
        <dbReference type="ChEBI" id="CHEBI:17568"/>
        <dbReference type="ChEBI" id="CHEBI:43474"/>
        <dbReference type="ChEBI" id="CHEBI:57720"/>
        <dbReference type="EC" id="2.4.2.2"/>
    </reaction>
</comment>
<comment type="catalytic activity">
    <reaction evidence="1">
        <text>xanthosine + phosphate = alpha-D-ribose 1-phosphate + xanthine</text>
        <dbReference type="Rhea" id="RHEA:27638"/>
        <dbReference type="ChEBI" id="CHEBI:17712"/>
        <dbReference type="ChEBI" id="CHEBI:18107"/>
        <dbReference type="ChEBI" id="CHEBI:43474"/>
        <dbReference type="ChEBI" id="CHEBI:57720"/>
        <dbReference type="EC" id="2.4.2.1"/>
    </reaction>
</comment>
<comment type="similarity">
    <text evidence="1">Belongs to the nucleoside phosphorylase PpnP family.</text>
</comment>
<proteinExistence type="inferred from homology"/>
<keyword id="KW-0328">Glycosyltransferase</keyword>
<keyword id="KW-0808">Transferase</keyword>
<accession>A1U4L8</accession>
<dbReference type="EC" id="2.4.2.1" evidence="1"/>
<dbReference type="EC" id="2.4.2.2" evidence="1"/>
<dbReference type="EMBL" id="CP000514">
    <property type="protein sequence ID" value="ABM19937.1"/>
    <property type="molecule type" value="Genomic_DNA"/>
</dbReference>
<dbReference type="RefSeq" id="WP_011786306.1">
    <property type="nucleotide sequence ID" value="NC_008740.1"/>
</dbReference>
<dbReference type="SMR" id="A1U4L8"/>
<dbReference type="STRING" id="351348.Maqu_2862"/>
<dbReference type="KEGG" id="maq:Maqu_2862"/>
<dbReference type="eggNOG" id="COG3123">
    <property type="taxonomic scope" value="Bacteria"/>
</dbReference>
<dbReference type="HOGENOM" id="CLU_157874_0_0_6"/>
<dbReference type="OrthoDB" id="9793848at2"/>
<dbReference type="Proteomes" id="UP000000998">
    <property type="component" value="Chromosome"/>
</dbReference>
<dbReference type="GO" id="GO:0005829">
    <property type="term" value="C:cytosol"/>
    <property type="evidence" value="ECO:0007669"/>
    <property type="project" value="TreeGrafter"/>
</dbReference>
<dbReference type="GO" id="GO:0047975">
    <property type="term" value="F:guanosine phosphorylase activity"/>
    <property type="evidence" value="ECO:0007669"/>
    <property type="project" value="UniProtKB-EC"/>
</dbReference>
<dbReference type="GO" id="GO:0004731">
    <property type="term" value="F:purine-nucleoside phosphorylase activity"/>
    <property type="evidence" value="ECO:0007669"/>
    <property type="project" value="UniProtKB-UniRule"/>
</dbReference>
<dbReference type="GO" id="GO:0009032">
    <property type="term" value="F:thymidine phosphorylase activity"/>
    <property type="evidence" value="ECO:0007669"/>
    <property type="project" value="UniProtKB-EC"/>
</dbReference>
<dbReference type="GO" id="GO:0004850">
    <property type="term" value="F:uridine phosphorylase activity"/>
    <property type="evidence" value="ECO:0007669"/>
    <property type="project" value="UniProtKB-EC"/>
</dbReference>
<dbReference type="CDD" id="cd20296">
    <property type="entry name" value="cupin_PpnP-like"/>
    <property type="match status" value="1"/>
</dbReference>
<dbReference type="FunFam" id="2.60.120.10:FF:000016">
    <property type="entry name" value="Pyrimidine/purine nucleoside phosphorylase"/>
    <property type="match status" value="1"/>
</dbReference>
<dbReference type="Gene3D" id="2.60.120.10">
    <property type="entry name" value="Jelly Rolls"/>
    <property type="match status" value="1"/>
</dbReference>
<dbReference type="HAMAP" id="MF_01537">
    <property type="entry name" value="Nucleos_phosphorylase_PpnP"/>
    <property type="match status" value="1"/>
</dbReference>
<dbReference type="InterPro" id="IPR009664">
    <property type="entry name" value="Ppnp"/>
</dbReference>
<dbReference type="InterPro" id="IPR014710">
    <property type="entry name" value="RmlC-like_jellyroll"/>
</dbReference>
<dbReference type="InterPro" id="IPR011051">
    <property type="entry name" value="RmlC_Cupin_sf"/>
</dbReference>
<dbReference type="PANTHER" id="PTHR36540">
    <property type="entry name" value="PYRIMIDINE/PURINE NUCLEOSIDE PHOSPHORYLASE"/>
    <property type="match status" value="1"/>
</dbReference>
<dbReference type="PANTHER" id="PTHR36540:SF1">
    <property type="entry name" value="PYRIMIDINE_PURINE NUCLEOSIDE PHOSPHORYLASE"/>
    <property type="match status" value="1"/>
</dbReference>
<dbReference type="Pfam" id="PF06865">
    <property type="entry name" value="Ppnp"/>
    <property type="match status" value="1"/>
</dbReference>
<dbReference type="SUPFAM" id="SSF51182">
    <property type="entry name" value="RmlC-like cupins"/>
    <property type="match status" value="1"/>
</dbReference>
<evidence type="ECO:0000255" key="1">
    <source>
        <dbReference type="HAMAP-Rule" id="MF_01537"/>
    </source>
</evidence>
<gene>
    <name evidence="1" type="primary">ppnP</name>
    <name type="ordered locus">Maqu_2862</name>
</gene>
<sequence>MLTVNEYFDGKVKSVAFQSSTLPATIGVISAGEYEFGTSEKETMTVVSGELTVLLPGQQDWQTFGAGESFEVAGQASFKAKTDADTAYLCTYG</sequence>
<feature type="chain" id="PRO_0000298701" description="Pyrimidine/purine nucleoside phosphorylase">
    <location>
        <begin position="1"/>
        <end position="93"/>
    </location>
</feature>
<reference key="1">
    <citation type="journal article" date="2011" name="Appl. Environ. Microbiol.">
        <title>Genomic potential of Marinobacter aquaeolei, a biogeochemical 'opportunitroph'.</title>
        <authorList>
            <person name="Singer E."/>
            <person name="Webb E.A."/>
            <person name="Nelson W.C."/>
            <person name="Heidelberg J.F."/>
            <person name="Ivanova N."/>
            <person name="Pati A."/>
            <person name="Edwards K.J."/>
        </authorList>
    </citation>
    <scope>NUCLEOTIDE SEQUENCE [LARGE SCALE GENOMIC DNA]</scope>
    <source>
        <strain>ATCC 700491 / DSM 11845 / VT8</strain>
    </source>
</reference>